<reference key="1">
    <citation type="journal article" date="1990" name="Gene">
        <title>Cloning and characterization of the Bacillus sphaericus genes controlling the bioconversion of pimelate into dethiobiotin.</title>
        <authorList>
            <person name="Gloeckler R."/>
            <person name="Ohsawa I."/>
            <person name="Speck D."/>
            <person name="Ledoux C."/>
            <person name="Bernard S."/>
            <person name="Zinsius M."/>
            <person name="Villeval D."/>
            <person name="Kisou T."/>
            <person name="Kamogawa K."/>
            <person name="Lemoine Y."/>
        </authorList>
    </citation>
    <scope>NUCLEOTIDE SEQUENCE [GENOMIC DNA]</scope>
    <source>
        <strain>ATCC 10208 / DSM 5019 / NBRC 3525 / NCIMB 11935 / NRS 966 / 1911</strain>
    </source>
</reference>
<keyword id="KW-0093">Biotin biosynthesis</keyword>
<keyword id="KW-1003">Cell membrane</keyword>
<keyword id="KW-0472">Membrane</keyword>
<keyword id="KW-0812">Transmembrane</keyword>
<keyword id="KW-1133">Transmembrane helix</keyword>
<name>BIOX_LYSSH</name>
<accession>P22821</accession>
<comment type="function">
    <text>Does not seem to be a permease of pimelate. Its role in biotin synthesis is not clear.</text>
</comment>
<comment type="subcellular location">
    <subcellularLocation>
        <location>Cell membrane</location>
        <topology>Multi-pass membrane protein</topology>
    </subcellularLocation>
</comment>
<organism>
    <name type="scientific">Lysinibacillus sphaericus</name>
    <name type="common">Bacillus sphaericus</name>
    <dbReference type="NCBI Taxonomy" id="1421"/>
    <lineage>
        <taxon>Bacteria</taxon>
        <taxon>Bacillati</taxon>
        <taxon>Bacillota</taxon>
        <taxon>Bacilli</taxon>
        <taxon>Bacillales</taxon>
        <taxon>Bacillaceae</taxon>
        <taxon>Lysinibacillus</taxon>
    </lineage>
</organism>
<proteinExistence type="predicted"/>
<sequence>MRKFSTYDLAQISLLACLIIVTGMFKIPTGIPGSEFQLSAPIAVAIAAVFGFKRYFLAGIIASLILFLLGIHSILNVEISIIFRLTVGLIIVLLGTSIPVLVVAGPIGTMVARLGLAFTLGTPFLPLFVLAIPGMVITAVSVYPITKMLYAINKKVAGDHHVRNVL</sequence>
<protein>
    <recommendedName>
        <fullName>Protein BioX</fullName>
    </recommendedName>
</protein>
<gene>
    <name type="primary">bioX</name>
</gene>
<feature type="chain" id="PRO_0000064930" description="Protein BioX">
    <location>
        <begin position="1"/>
        <end position="166"/>
    </location>
</feature>
<feature type="transmembrane region" description="Helical" evidence="1">
    <location>
        <begin position="12"/>
        <end position="32"/>
    </location>
</feature>
<feature type="transmembrane region" description="Helical" evidence="1">
    <location>
        <begin position="33"/>
        <end position="53"/>
    </location>
</feature>
<feature type="transmembrane region" description="Helical" evidence="1">
    <location>
        <begin position="55"/>
        <end position="75"/>
    </location>
</feature>
<feature type="transmembrane region" description="Helical" evidence="1">
    <location>
        <begin position="87"/>
        <end position="107"/>
    </location>
</feature>
<feature type="transmembrane region" description="Helical" evidence="1">
    <location>
        <begin position="117"/>
        <end position="137"/>
    </location>
</feature>
<evidence type="ECO:0000255" key="1"/>
<dbReference type="EMBL" id="M29291">
    <property type="protein sequence ID" value="AAA22269.1"/>
    <property type="molecule type" value="Genomic_DNA"/>
</dbReference>
<dbReference type="PIR" id="JQ0510">
    <property type="entry name" value="JQ0510"/>
</dbReference>
<dbReference type="RefSeq" id="WP_024362855.1">
    <property type="nucleotide sequence ID" value="NZ_UFSZ01000001.1"/>
</dbReference>
<dbReference type="GO" id="GO:0005886">
    <property type="term" value="C:plasma membrane"/>
    <property type="evidence" value="ECO:0007669"/>
    <property type="project" value="UniProtKB-SubCell"/>
</dbReference>
<dbReference type="GO" id="GO:0009102">
    <property type="term" value="P:biotin biosynthetic process"/>
    <property type="evidence" value="ECO:0007669"/>
    <property type="project" value="UniProtKB-KW"/>
</dbReference>
<dbReference type="Gene3D" id="1.10.1760.20">
    <property type="match status" value="1"/>
</dbReference>